<feature type="signal peptide" evidence="4">
    <location>
        <begin position="1"/>
        <end position="16"/>
    </location>
</feature>
<feature type="chain" id="PRO_0000022965" description="Basic phospholipase A2 trimucrotoxin">
    <location>
        <begin position="17"/>
        <end position="138"/>
    </location>
</feature>
<feature type="active site" evidence="1">
    <location>
        <position position="63"/>
    </location>
</feature>
<feature type="active site" evidence="1">
    <location>
        <position position="105"/>
    </location>
</feature>
<feature type="binding site" evidence="1">
    <location>
        <position position="43"/>
    </location>
    <ligand>
        <name>Ca(2+)</name>
        <dbReference type="ChEBI" id="CHEBI:29108"/>
    </ligand>
</feature>
<feature type="binding site" evidence="1">
    <location>
        <position position="45"/>
    </location>
    <ligand>
        <name>Ca(2+)</name>
        <dbReference type="ChEBI" id="CHEBI:29108"/>
    </ligand>
</feature>
<feature type="binding site" evidence="1">
    <location>
        <position position="47"/>
    </location>
    <ligand>
        <name>Ca(2+)</name>
        <dbReference type="ChEBI" id="CHEBI:29108"/>
    </ligand>
</feature>
<feature type="binding site" evidence="1">
    <location>
        <position position="64"/>
    </location>
    <ligand>
        <name>Ca(2+)</name>
        <dbReference type="ChEBI" id="CHEBI:29108"/>
    </ligand>
</feature>
<feature type="disulfide bond" evidence="1">
    <location>
        <begin position="42"/>
        <end position="131"/>
    </location>
</feature>
<feature type="disulfide bond" evidence="1">
    <location>
        <begin position="44"/>
        <end position="60"/>
    </location>
</feature>
<feature type="disulfide bond" evidence="1">
    <location>
        <begin position="59"/>
        <end position="111"/>
    </location>
</feature>
<feature type="disulfide bond" evidence="1">
    <location>
        <begin position="65"/>
        <end position="138"/>
    </location>
</feature>
<feature type="disulfide bond" evidence="1">
    <location>
        <begin position="66"/>
        <end position="104"/>
    </location>
</feature>
<feature type="disulfide bond" evidence="1">
    <location>
        <begin position="73"/>
        <end position="97"/>
    </location>
</feature>
<feature type="disulfide bond" evidence="1">
    <location>
        <begin position="91"/>
        <end position="102"/>
    </location>
</feature>
<feature type="mutagenesis site" description="76% loss of PA2 activity and 97% loss of toxicity." evidence="6">
    <original>NKM</original>
    <variation>ETL</variation>
    <location>
        <begin position="22"/>
        <end position="24"/>
    </location>
</feature>
<feature type="mutagenesis site" description="47% loss of PA2 activity and 67% loss of toxicity." evidence="6">
    <original>N</original>
    <variation>A</variation>
    <location>
        <position position="22"/>
    </location>
</feature>
<feature type="mutagenesis site" description="10% loss of PA2 activity and 90% loss of toxicity." evidence="6">
    <original>N</original>
    <variation>E</variation>
    <location>
        <position position="22"/>
    </location>
</feature>
<feature type="mutagenesis site" description="83% loss of PA2 activity and 97% loss of toxicity." evidence="6">
    <original>N</original>
    <variation>R</variation>
    <location>
        <position position="22"/>
    </location>
</feature>
<feature type="sequence conflict" description="In Ref. 2; no nucleotide entry." evidence="8" ref="2">
    <original>T</original>
    <variation>Y</variation>
    <location>
        <position position="71"/>
    </location>
</feature>
<reference key="1">
    <citation type="journal article" date="1995" name="Biochem. J.">
        <title>Molecular cloning and characterization of a neurotoxic phospholipase A2 from the venom of Taiwan habu (Trimeresurus mucrosquamatus).</title>
        <authorList>
            <person name="Tsai I.-H."/>
            <person name="Lu P.J."/>
            <person name="Wang Y.-M."/>
            <person name="Ho C.L."/>
            <person name="Liaw L.L."/>
        </authorList>
    </citation>
    <scope>NUCLEOTIDE SEQUENCE [MRNA]</scope>
    <scope>PARTIAL PROTEIN SEQUENCE</scope>
    <scope>FUNCTION</scope>
    <scope>SUBUNIT</scope>
    <scope>TOXIC DOSE</scope>
    <source>
        <tissue>Venom</tissue>
        <tissue>Venom gland</tissue>
    </source>
</reference>
<reference key="2">
    <citation type="journal article" date="2009" name="Toxin Rev.">
        <title>Cloning, functional expression, and characterization of an edema-producing Asp-49 phospholipase A2 from Trimeresurus mucrosquamatus.</title>
        <authorList>
            <person name="Guo Y.-W."/>
            <person name="Liu H.-W."/>
            <person name="Chang T.-Y."/>
            <person name="Chen C.-T."/>
            <person name="Li C.-J."/>
        </authorList>
    </citation>
    <scope>NUCLEOTIDE SEQUENCE [MRNA]</scope>
    <scope>FUNCTION</scope>
    <scope>TISSUE SPECIFICITY</scope>
    <source>
        <tissue>Venom</tissue>
        <tissue>Venom gland</tissue>
    </source>
</reference>
<reference key="3">
    <citation type="journal article" date="2004" name="Biochem. J.">
        <title>Molecular evolution and structure-function relationships of crotoxin-like and asparagine-6-containing phospholipases A2 in pit viper venoms.</title>
        <authorList>
            <person name="Chen Y.-H."/>
            <person name="Wang Y.-M."/>
            <person name="Hseu M.-J."/>
            <person name="Tsai I.-H."/>
        </authorList>
    </citation>
    <scope>PROTEIN SEQUENCE OF 17-39</scope>
    <scope>FUNCTION</scope>
    <scope>MASS SPECTROMETRY</scope>
    <source>
        <tissue>Venom</tissue>
    </source>
</reference>
<reference key="4">
    <citation type="journal article" date="1998" name="Toxicon">
        <title>Effect of site directed mutagenesis on the activity of recombinant trimucrotoxin, a neurotoxic phospholipase from Trimeresurus mucrosquamatus venom.</title>
        <authorList>
            <person name="Tsai I.-H."/>
            <person name="Wang Y.-M."/>
        </authorList>
    </citation>
    <scope>MUTAGENESIS OF ASN-22 AND 22-ASN--MET-24</scope>
</reference>
<proteinExistence type="evidence at protein level"/>
<sequence length="138" mass="15668">MRTLWIVAVLLLGVEGNLLQFNKMIKIMTKKNAIPFYSSYGCYCGWGGQGKPKDATDRCCFVHDCCYGKLTDCSPKSDIYSYSWKTGIIICGEGTECEKKICECDRAAAVCLGHNLRTYKKRYMFYPDFLCTDPSEKC</sequence>
<accession>Q90W39</accession>
<evidence type="ECO:0000250" key="1"/>
<evidence type="ECO:0000255" key="2">
    <source>
        <dbReference type="PROSITE-ProRule" id="PRU10035"/>
    </source>
</evidence>
<evidence type="ECO:0000255" key="3">
    <source>
        <dbReference type="PROSITE-ProRule" id="PRU10036"/>
    </source>
</evidence>
<evidence type="ECO:0000269" key="4">
    <source>
    </source>
</evidence>
<evidence type="ECO:0000269" key="5">
    <source>
    </source>
</evidence>
<evidence type="ECO:0000269" key="6">
    <source>
    </source>
</evidence>
<evidence type="ECO:0000269" key="7">
    <source ref="2"/>
</evidence>
<evidence type="ECO:0000305" key="8"/>
<dbReference type="EC" id="3.1.1.4"/>
<dbReference type="EMBL" id="X77645">
    <property type="status" value="NOT_ANNOTATED_CDS"/>
    <property type="molecule type" value="mRNA"/>
</dbReference>
<dbReference type="EMBL" id="AF408409">
    <property type="protein sequence ID" value="AAK97534.1"/>
    <property type="molecule type" value="mRNA"/>
</dbReference>
<dbReference type="PIR" id="S59522">
    <property type="entry name" value="S59522"/>
</dbReference>
<dbReference type="RefSeq" id="XP_015675832.1">
    <property type="nucleotide sequence ID" value="XM_015820346.1"/>
</dbReference>
<dbReference type="RefSeq" id="XP_015675833.1">
    <property type="nucleotide sequence ID" value="XM_015820347.1"/>
</dbReference>
<dbReference type="SMR" id="Q90W39"/>
<dbReference type="GeneID" id="107291353"/>
<dbReference type="KEGG" id="pmur:107291353"/>
<dbReference type="OMA" id="LLQFNKM"/>
<dbReference type="OrthoDB" id="5841574at2759"/>
<dbReference type="GO" id="GO:0005576">
    <property type="term" value="C:extracellular region"/>
    <property type="evidence" value="ECO:0007669"/>
    <property type="project" value="UniProtKB-SubCell"/>
</dbReference>
<dbReference type="GO" id="GO:0005509">
    <property type="term" value="F:calcium ion binding"/>
    <property type="evidence" value="ECO:0007669"/>
    <property type="project" value="InterPro"/>
</dbReference>
<dbReference type="GO" id="GO:0047498">
    <property type="term" value="F:calcium-dependent phospholipase A2 activity"/>
    <property type="evidence" value="ECO:0007669"/>
    <property type="project" value="TreeGrafter"/>
</dbReference>
<dbReference type="GO" id="GO:0005543">
    <property type="term" value="F:phospholipid binding"/>
    <property type="evidence" value="ECO:0007669"/>
    <property type="project" value="TreeGrafter"/>
</dbReference>
<dbReference type="GO" id="GO:0090729">
    <property type="term" value="F:toxin activity"/>
    <property type="evidence" value="ECO:0007669"/>
    <property type="project" value="UniProtKB-KW"/>
</dbReference>
<dbReference type="GO" id="GO:0050482">
    <property type="term" value="P:arachidonate secretion"/>
    <property type="evidence" value="ECO:0007669"/>
    <property type="project" value="InterPro"/>
</dbReference>
<dbReference type="GO" id="GO:0016042">
    <property type="term" value="P:lipid catabolic process"/>
    <property type="evidence" value="ECO:0007669"/>
    <property type="project" value="UniProtKB-KW"/>
</dbReference>
<dbReference type="GO" id="GO:0042130">
    <property type="term" value="P:negative regulation of T cell proliferation"/>
    <property type="evidence" value="ECO:0007669"/>
    <property type="project" value="TreeGrafter"/>
</dbReference>
<dbReference type="GO" id="GO:0006644">
    <property type="term" value="P:phospholipid metabolic process"/>
    <property type="evidence" value="ECO:0007669"/>
    <property type="project" value="InterPro"/>
</dbReference>
<dbReference type="CDD" id="cd00125">
    <property type="entry name" value="PLA2c"/>
    <property type="match status" value="1"/>
</dbReference>
<dbReference type="FunFam" id="1.20.90.10:FF:000001">
    <property type="entry name" value="Basic phospholipase A2 homolog"/>
    <property type="match status" value="1"/>
</dbReference>
<dbReference type="Gene3D" id="1.20.90.10">
    <property type="entry name" value="Phospholipase A2 domain"/>
    <property type="match status" value="1"/>
</dbReference>
<dbReference type="InterPro" id="IPR001211">
    <property type="entry name" value="PLipase_A2"/>
</dbReference>
<dbReference type="InterPro" id="IPR033112">
    <property type="entry name" value="PLipase_A2_Asp_AS"/>
</dbReference>
<dbReference type="InterPro" id="IPR016090">
    <property type="entry name" value="PLipase_A2_dom"/>
</dbReference>
<dbReference type="InterPro" id="IPR036444">
    <property type="entry name" value="PLipase_A2_dom_sf"/>
</dbReference>
<dbReference type="InterPro" id="IPR033113">
    <property type="entry name" value="PLipase_A2_His_AS"/>
</dbReference>
<dbReference type="PANTHER" id="PTHR11716">
    <property type="entry name" value="PHOSPHOLIPASE A2 FAMILY MEMBER"/>
    <property type="match status" value="1"/>
</dbReference>
<dbReference type="PANTHER" id="PTHR11716:SF9">
    <property type="entry name" value="PHOSPHOLIPASE A2, MEMBRANE ASSOCIATED"/>
    <property type="match status" value="1"/>
</dbReference>
<dbReference type="Pfam" id="PF00068">
    <property type="entry name" value="Phospholip_A2_1"/>
    <property type="match status" value="1"/>
</dbReference>
<dbReference type="PRINTS" id="PR00389">
    <property type="entry name" value="PHPHLIPASEA2"/>
</dbReference>
<dbReference type="SMART" id="SM00085">
    <property type="entry name" value="PA2c"/>
    <property type="match status" value="1"/>
</dbReference>
<dbReference type="SUPFAM" id="SSF48619">
    <property type="entry name" value="Phospholipase A2, PLA2"/>
    <property type="match status" value="1"/>
</dbReference>
<dbReference type="PROSITE" id="PS00119">
    <property type="entry name" value="PA2_ASP"/>
    <property type="match status" value="1"/>
</dbReference>
<dbReference type="PROSITE" id="PS00118">
    <property type="entry name" value="PA2_HIS"/>
    <property type="match status" value="1"/>
</dbReference>
<organism>
    <name type="scientific">Protobothrops mucrosquamatus</name>
    <name type="common">Taiwan habu</name>
    <name type="synonym">Trimeresurus mucrosquamatus</name>
    <dbReference type="NCBI Taxonomy" id="103944"/>
    <lineage>
        <taxon>Eukaryota</taxon>
        <taxon>Metazoa</taxon>
        <taxon>Chordata</taxon>
        <taxon>Craniata</taxon>
        <taxon>Vertebrata</taxon>
        <taxon>Euteleostomi</taxon>
        <taxon>Lepidosauria</taxon>
        <taxon>Squamata</taxon>
        <taxon>Bifurcata</taxon>
        <taxon>Unidentata</taxon>
        <taxon>Episquamata</taxon>
        <taxon>Toxicofera</taxon>
        <taxon>Serpentes</taxon>
        <taxon>Colubroidea</taxon>
        <taxon>Viperidae</taxon>
        <taxon>Crotalinae</taxon>
        <taxon>Protobothrops</taxon>
    </lineage>
</organism>
<protein>
    <recommendedName>
        <fullName>Basic phospholipase A2 trimucrotoxin</fullName>
        <shortName>svPLA2</shortName>
        <ecNumber>3.1.1.4</ecNumber>
    </recommendedName>
    <alternativeName>
        <fullName>Phosphatidylcholine 2-acylhydrolase</fullName>
    </alternativeName>
    <alternativeName>
        <fullName>TMV-D49-PLA2</fullName>
    </alternativeName>
</protein>
<name>PA2BT_PROMU</name>
<keyword id="KW-0106">Calcium</keyword>
<keyword id="KW-0903">Direct protein sequencing</keyword>
<keyword id="KW-1015">Disulfide bond</keyword>
<keyword id="KW-0378">Hydrolase</keyword>
<keyword id="KW-0442">Lipid degradation</keyword>
<keyword id="KW-0443">Lipid metabolism</keyword>
<keyword id="KW-0479">Metal-binding</keyword>
<keyword id="KW-0959">Myotoxin</keyword>
<keyword id="KW-0528">Neurotoxin</keyword>
<keyword id="KW-0638">Presynaptic neurotoxin</keyword>
<keyword id="KW-0964">Secreted</keyword>
<keyword id="KW-0732">Signal</keyword>
<keyword id="KW-0800">Toxin</keyword>
<comment type="function">
    <text evidence="4 5 7">Snake venom phospholipase A2 (PLA2) that displays edema-inducing activities, as well as presynaptic neurotoxicity and low myotoxicity. PLA2 catalyzes the calcium-dependent hydrolysis of the 2-acyl groups in 3-sn-phosphoglycerides.</text>
</comment>
<comment type="catalytic activity">
    <reaction evidence="2 3">
        <text>a 1,2-diacyl-sn-glycero-3-phosphocholine + H2O = a 1-acyl-sn-glycero-3-phosphocholine + a fatty acid + H(+)</text>
        <dbReference type="Rhea" id="RHEA:15801"/>
        <dbReference type="ChEBI" id="CHEBI:15377"/>
        <dbReference type="ChEBI" id="CHEBI:15378"/>
        <dbReference type="ChEBI" id="CHEBI:28868"/>
        <dbReference type="ChEBI" id="CHEBI:57643"/>
        <dbReference type="ChEBI" id="CHEBI:58168"/>
        <dbReference type="EC" id="3.1.1.4"/>
    </reaction>
</comment>
<comment type="cofactor">
    <cofactor evidence="1">
        <name>Ca(2+)</name>
        <dbReference type="ChEBI" id="CHEBI:29108"/>
    </cofactor>
    <text evidence="1">Binds 1 Ca(2+) ion per subunit.</text>
</comment>
<comment type="subunit">
    <text evidence="5">Homodimer.</text>
</comment>
<comment type="subcellular location">
    <subcellularLocation>
        <location>Secreted</location>
    </subcellularLocation>
</comment>
<comment type="tissue specificity">
    <text evidence="7">Expressed by the venom gland.</text>
</comment>
<comment type="mass spectrometry" mass="13902.0" method="Electrospray" evidence="4"/>
<comment type="toxic dose">
    <text evidence="5">LD(50) is 1.2 mg/kg by intravenous injection into mice.</text>
</comment>
<comment type="similarity">
    <text evidence="8">Belongs to the phospholipase A2 family. Group II subfamily. D49 sub-subfamily.</text>
</comment>
<comment type="caution">
    <text evidence="8">Ref.2 refers to only one protein (TMV-D49-PLA2), but erroneously shows two sequences. The translation of AF408409 (mentioned in Ref.2 as submitted to GenBank) differs by one amino acid from the sequence shown in Fig.1 and described in the text (see the conflict at position 71).</text>
</comment>